<gene>
    <name evidence="1" type="primary">mraZ</name>
    <name type="ordered locus">PFL_5070</name>
</gene>
<sequence length="151" mass="17033">MFRGANAISLDAKGRLAMPSRYRDELVSRSSGQLIVTIDAVDPCLCVYPLDEWELIETKLRALPSLREENRRLQRLLIGNAVDLELDGSGRFLVPPRLREYAKLDKRAMLVGQLNKFQLWDEDAWNAVSAADLAAIQQPGAMPDELRDLIL</sequence>
<accession>Q4K6I4</accession>
<feature type="chain" id="PRO_0000230100" description="Transcriptional regulator MraZ">
    <location>
        <begin position="1"/>
        <end position="151"/>
    </location>
</feature>
<feature type="domain" description="SpoVT-AbrB 1" evidence="2">
    <location>
        <begin position="5"/>
        <end position="52"/>
    </location>
</feature>
<feature type="domain" description="SpoVT-AbrB 2" evidence="2">
    <location>
        <begin position="81"/>
        <end position="124"/>
    </location>
</feature>
<protein>
    <recommendedName>
        <fullName>Transcriptional regulator MraZ</fullName>
    </recommendedName>
</protein>
<proteinExistence type="inferred from homology"/>
<keyword id="KW-0963">Cytoplasm</keyword>
<keyword id="KW-0238">DNA-binding</keyword>
<keyword id="KW-0677">Repeat</keyword>
<keyword id="KW-0804">Transcription</keyword>
<keyword id="KW-0805">Transcription regulation</keyword>
<evidence type="ECO:0000255" key="1">
    <source>
        <dbReference type="HAMAP-Rule" id="MF_01008"/>
    </source>
</evidence>
<evidence type="ECO:0000255" key="2">
    <source>
        <dbReference type="PROSITE-ProRule" id="PRU01076"/>
    </source>
</evidence>
<name>MRAZ_PSEF5</name>
<dbReference type="EMBL" id="CP000076">
    <property type="protein sequence ID" value="AAY94298.1"/>
    <property type="molecule type" value="Genomic_DNA"/>
</dbReference>
<dbReference type="RefSeq" id="WP_011063319.1">
    <property type="nucleotide sequence ID" value="NC_004129.6"/>
</dbReference>
<dbReference type="SMR" id="Q4K6I4"/>
<dbReference type="STRING" id="220664.PFL_5070"/>
<dbReference type="GeneID" id="57478042"/>
<dbReference type="KEGG" id="pfl:PFL_5070"/>
<dbReference type="eggNOG" id="COG2001">
    <property type="taxonomic scope" value="Bacteria"/>
</dbReference>
<dbReference type="HOGENOM" id="CLU_107907_2_0_6"/>
<dbReference type="Proteomes" id="UP000008540">
    <property type="component" value="Chromosome"/>
</dbReference>
<dbReference type="GO" id="GO:0005737">
    <property type="term" value="C:cytoplasm"/>
    <property type="evidence" value="ECO:0007669"/>
    <property type="project" value="UniProtKB-UniRule"/>
</dbReference>
<dbReference type="GO" id="GO:0009295">
    <property type="term" value="C:nucleoid"/>
    <property type="evidence" value="ECO:0007669"/>
    <property type="project" value="UniProtKB-SubCell"/>
</dbReference>
<dbReference type="GO" id="GO:0003700">
    <property type="term" value="F:DNA-binding transcription factor activity"/>
    <property type="evidence" value="ECO:0007669"/>
    <property type="project" value="UniProtKB-UniRule"/>
</dbReference>
<dbReference type="GO" id="GO:0000976">
    <property type="term" value="F:transcription cis-regulatory region binding"/>
    <property type="evidence" value="ECO:0007669"/>
    <property type="project" value="TreeGrafter"/>
</dbReference>
<dbReference type="GO" id="GO:2000143">
    <property type="term" value="P:negative regulation of DNA-templated transcription initiation"/>
    <property type="evidence" value="ECO:0007669"/>
    <property type="project" value="TreeGrafter"/>
</dbReference>
<dbReference type="CDD" id="cd16321">
    <property type="entry name" value="MraZ_C"/>
    <property type="match status" value="1"/>
</dbReference>
<dbReference type="CDD" id="cd16320">
    <property type="entry name" value="MraZ_N"/>
    <property type="match status" value="1"/>
</dbReference>
<dbReference type="Gene3D" id="3.40.1550.20">
    <property type="entry name" value="Transcriptional regulator MraZ domain"/>
    <property type="match status" value="1"/>
</dbReference>
<dbReference type="HAMAP" id="MF_01008">
    <property type="entry name" value="MraZ"/>
    <property type="match status" value="1"/>
</dbReference>
<dbReference type="InterPro" id="IPR003444">
    <property type="entry name" value="MraZ"/>
</dbReference>
<dbReference type="InterPro" id="IPR035644">
    <property type="entry name" value="MraZ_C"/>
</dbReference>
<dbReference type="InterPro" id="IPR020603">
    <property type="entry name" value="MraZ_dom"/>
</dbReference>
<dbReference type="InterPro" id="IPR035642">
    <property type="entry name" value="MraZ_N"/>
</dbReference>
<dbReference type="InterPro" id="IPR038619">
    <property type="entry name" value="MraZ_sf"/>
</dbReference>
<dbReference type="InterPro" id="IPR007159">
    <property type="entry name" value="SpoVT-AbrB_dom"/>
</dbReference>
<dbReference type="InterPro" id="IPR037914">
    <property type="entry name" value="SpoVT-AbrB_sf"/>
</dbReference>
<dbReference type="NCBIfam" id="TIGR00242">
    <property type="entry name" value="division/cell wall cluster transcriptional repressor MraZ"/>
    <property type="match status" value="1"/>
</dbReference>
<dbReference type="PANTHER" id="PTHR34701">
    <property type="entry name" value="TRANSCRIPTIONAL REGULATOR MRAZ"/>
    <property type="match status" value="1"/>
</dbReference>
<dbReference type="PANTHER" id="PTHR34701:SF1">
    <property type="entry name" value="TRANSCRIPTIONAL REGULATOR MRAZ"/>
    <property type="match status" value="1"/>
</dbReference>
<dbReference type="Pfam" id="PF02381">
    <property type="entry name" value="MraZ"/>
    <property type="match status" value="2"/>
</dbReference>
<dbReference type="SUPFAM" id="SSF89447">
    <property type="entry name" value="AbrB/MazE/MraZ-like"/>
    <property type="match status" value="1"/>
</dbReference>
<dbReference type="PROSITE" id="PS51740">
    <property type="entry name" value="SPOVT_ABRB"/>
    <property type="match status" value="2"/>
</dbReference>
<comment type="subunit">
    <text evidence="1">Forms oligomers.</text>
</comment>
<comment type="subcellular location">
    <subcellularLocation>
        <location evidence="1">Cytoplasm</location>
        <location evidence="1">Nucleoid</location>
    </subcellularLocation>
</comment>
<comment type="similarity">
    <text evidence="1">Belongs to the MraZ family.</text>
</comment>
<organism>
    <name type="scientific">Pseudomonas fluorescens (strain ATCC BAA-477 / NRRL B-23932 / Pf-5)</name>
    <dbReference type="NCBI Taxonomy" id="220664"/>
    <lineage>
        <taxon>Bacteria</taxon>
        <taxon>Pseudomonadati</taxon>
        <taxon>Pseudomonadota</taxon>
        <taxon>Gammaproteobacteria</taxon>
        <taxon>Pseudomonadales</taxon>
        <taxon>Pseudomonadaceae</taxon>
        <taxon>Pseudomonas</taxon>
    </lineage>
</organism>
<reference key="1">
    <citation type="journal article" date="2005" name="Nat. Biotechnol.">
        <title>Complete genome sequence of the plant commensal Pseudomonas fluorescens Pf-5.</title>
        <authorList>
            <person name="Paulsen I.T."/>
            <person name="Press C.M."/>
            <person name="Ravel J."/>
            <person name="Kobayashi D.Y."/>
            <person name="Myers G.S.A."/>
            <person name="Mavrodi D.V."/>
            <person name="DeBoy R.T."/>
            <person name="Seshadri R."/>
            <person name="Ren Q."/>
            <person name="Madupu R."/>
            <person name="Dodson R.J."/>
            <person name="Durkin A.S."/>
            <person name="Brinkac L.M."/>
            <person name="Daugherty S.C."/>
            <person name="Sullivan S.A."/>
            <person name="Rosovitz M.J."/>
            <person name="Gwinn M.L."/>
            <person name="Zhou L."/>
            <person name="Schneider D.J."/>
            <person name="Cartinhour S.W."/>
            <person name="Nelson W.C."/>
            <person name="Weidman J."/>
            <person name="Watkins K."/>
            <person name="Tran K."/>
            <person name="Khouri H."/>
            <person name="Pierson E.A."/>
            <person name="Pierson L.S. III"/>
            <person name="Thomashow L.S."/>
            <person name="Loper J.E."/>
        </authorList>
    </citation>
    <scope>NUCLEOTIDE SEQUENCE [LARGE SCALE GENOMIC DNA]</scope>
    <source>
        <strain>ATCC BAA-477 / NRRL B-23932 / Pf-5</strain>
    </source>
</reference>